<organism>
    <name type="scientific">Salmonella newport (strain SL254)</name>
    <dbReference type="NCBI Taxonomy" id="423368"/>
    <lineage>
        <taxon>Bacteria</taxon>
        <taxon>Pseudomonadati</taxon>
        <taxon>Pseudomonadota</taxon>
        <taxon>Gammaproteobacteria</taxon>
        <taxon>Enterobacterales</taxon>
        <taxon>Enterobacteriaceae</taxon>
        <taxon>Salmonella</taxon>
    </lineage>
</organism>
<dbReference type="EMBL" id="CP001113">
    <property type="protein sequence ID" value="ACF64631.1"/>
    <property type="molecule type" value="Genomic_DNA"/>
</dbReference>
<dbReference type="RefSeq" id="WP_000719042.1">
    <property type="nucleotide sequence ID" value="NZ_CCMR01000003.1"/>
</dbReference>
<dbReference type="SMR" id="B4SW74"/>
<dbReference type="KEGG" id="see:SNSL254_A2130"/>
<dbReference type="HOGENOM" id="CLU_147249_0_2_6"/>
<dbReference type="Proteomes" id="UP000008824">
    <property type="component" value="Chromosome"/>
</dbReference>
<dbReference type="GO" id="GO:0009425">
    <property type="term" value="C:bacterial-type flagellum basal body"/>
    <property type="evidence" value="ECO:0007669"/>
    <property type="project" value="UniProtKB-SubCell"/>
</dbReference>
<dbReference type="GO" id="GO:0003774">
    <property type="term" value="F:cytoskeletal motor activity"/>
    <property type="evidence" value="ECO:0007669"/>
    <property type="project" value="InterPro"/>
</dbReference>
<dbReference type="GO" id="GO:0005198">
    <property type="term" value="F:structural molecule activity"/>
    <property type="evidence" value="ECO:0007669"/>
    <property type="project" value="InterPro"/>
</dbReference>
<dbReference type="GO" id="GO:0071973">
    <property type="term" value="P:bacterial-type flagellum-dependent cell motility"/>
    <property type="evidence" value="ECO:0007669"/>
    <property type="project" value="InterPro"/>
</dbReference>
<dbReference type="HAMAP" id="MF_00724">
    <property type="entry name" value="FliE"/>
    <property type="match status" value="1"/>
</dbReference>
<dbReference type="InterPro" id="IPR001624">
    <property type="entry name" value="FliE"/>
</dbReference>
<dbReference type="NCBIfam" id="TIGR00205">
    <property type="entry name" value="fliE"/>
    <property type="match status" value="1"/>
</dbReference>
<dbReference type="PANTHER" id="PTHR34653">
    <property type="match status" value="1"/>
</dbReference>
<dbReference type="PANTHER" id="PTHR34653:SF1">
    <property type="entry name" value="FLAGELLAR HOOK-BASAL BODY COMPLEX PROTEIN FLIE"/>
    <property type="match status" value="1"/>
</dbReference>
<dbReference type="Pfam" id="PF02049">
    <property type="entry name" value="FliE"/>
    <property type="match status" value="1"/>
</dbReference>
<dbReference type="PRINTS" id="PR01006">
    <property type="entry name" value="FLGHOOKFLIE"/>
</dbReference>
<protein>
    <recommendedName>
        <fullName evidence="1">Flagellar hook-basal body complex protein FliE</fullName>
    </recommendedName>
</protein>
<sequence length="104" mass="11053">MAAIQGIEGVISQLQATAMAASGQETHSQSTVSFAGQLHAALDRISDRQTAARVQAEKFTLGEPGIALNDVMADMQKASVSMQMGIQVRNKLVAAYQEVMSMQV</sequence>
<keyword id="KW-0975">Bacterial flagellum</keyword>
<feature type="chain" id="PRO_1000132674" description="Flagellar hook-basal body complex protein FliE">
    <location>
        <begin position="1"/>
        <end position="104"/>
    </location>
</feature>
<accession>B4SW74</accession>
<proteinExistence type="inferred from homology"/>
<reference key="1">
    <citation type="journal article" date="2011" name="J. Bacteriol.">
        <title>Comparative genomics of 28 Salmonella enterica isolates: evidence for CRISPR-mediated adaptive sublineage evolution.</title>
        <authorList>
            <person name="Fricke W.F."/>
            <person name="Mammel M.K."/>
            <person name="McDermott P.F."/>
            <person name="Tartera C."/>
            <person name="White D.G."/>
            <person name="Leclerc J.E."/>
            <person name="Ravel J."/>
            <person name="Cebula T.A."/>
        </authorList>
    </citation>
    <scope>NUCLEOTIDE SEQUENCE [LARGE SCALE GENOMIC DNA]</scope>
    <source>
        <strain>SL254</strain>
    </source>
</reference>
<name>FLIE_SALNS</name>
<gene>
    <name evidence="1" type="primary">fliE</name>
    <name type="ordered locus">SNSL254_A2130</name>
</gene>
<comment type="subcellular location">
    <subcellularLocation>
        <location evidence="1">Bacterial flagellum basal body</location>
    </subcellularLocation>
</comment>
<comment type="similarity">
    <text evidence="1">Belongs to the FliE family.</text>
</comment>
<evidence type="ECO:0000255" key="1">
    <source>
        <dbReference type="HAMAP-Rule" id="MF_00724"/>
    </source>
</evidence>